<comment type="function">
    <text evidence="1">Produces ATP from ADP in the presence of a proton gradient across the membrane. The V-type alpha chain is a catalytic subunit (By similarity).</text>
</comment>
<comment type="catalytic activity">
    <reaction>
        <text>ATP + H2O + 4 H(+)(in) = ADP + phosphate + 5 H(+)(out)</text>
        <dbReference type="Rhea" id="RHEA:57720"/>
        <dbReference type="ChEBI" id="CHEBI:15377"/>
        <dbReference type="ChEBI" id="CHEBI:15378"/>
        <dbReference type="ChEBI" id="CHEBI:30616"/>
        <dbReference type="ChEBI" id="CHEBI:43474"/>
        <dbReference type="ChEBI" id="CHEBI:456216"/>
        <dbReference type="EC" id="7.1.2.2"/>
    </reaction>
</comment>
<comment type="similarity">
    <text evidence="3">Belongs to the ATPase alpha/beta chains family.</text>
</comment>
<evidence type="ECO:0000250" key="1"/>
<evidence type="ECO:0000255" key="2"/>
<evidence type="ECO:0000305" key="3"/>
<feature type="chain" id="PRO_0000144611" description="V-type ATP synthase alpha chain">
    <location>
        <begin position="1"/>
        <end position="591"/>
    </location>
</feature>
<feature type="binding site" evidence="2">
    <location>
        <begin position="242"/>
        <end position="249"/>
    </location>
    <ligand>
        <name>ATP</name>
        <dbReference type="ChEBI" id="CHEBI:30616"/>
    </ligand>
</feature>
<gene>
    <name type="primary">atpA</name>
    <name type="ordered locus">TC_0582</name>
</gene>
<accession>Q9PK85</accession>
<name>VATA_CHLMU</name>
<keyword id="KW-0066">ATP synthesis</keyword>
<keyword id="KW-0067">ATP-binding</keyword>
<keyword id="KW-0375">Hydrogen ion transport</keyword>
<keyword id="KW-0406">Ion transport</keyword>
<keyword id="KW-0547">Nucleotide-binding</keyword>
<keyword id="KW-1278">Translocase</keyword>
<keyword id="KW-0813">Transport</keyword>
<protein>
    <recommendedName>
        <fullName>V-type ATP synthase alpha chain</fullName>
        <ecNumber>7.1.2.2</ecNumber>
    </recommendedName>
    <alternativeName>
        <fullName>V-ATPase subunit A</fullName>
    </alternativeName>
</protein>
<organism>
    <name type="scientific">Chlamydia muridarum (strain MoPn / Nigg)</name>
    <dbReference type="NCBI Taxonomy" id="243161"/>
    <lineage>
        <taxon>Bacteria</taxon>
        <taxon>Pseudomonadati</taxon>
        <taxon>Chlamydiota</taxon>
        <taxon>Chlamydiia</taxon>
        <taxon>Chlamydiales</taxon>
        <taxon>Chlamydiaceae</taxon>
        <taxon>Chlamydia/Chlamydophila group</taxon>
        <taxon>Chlamydia</taxon>
    </lineage>
</organism>
<reference key="1">
    <citation type="journal article" date="2000" name="Nucleic Acids Res.">
        <title>Genome sequences of Chlamydia trachomatis MoPn and Chlamydia pneumoniae AR39.</title>
        <authorList>
            <person name="Read T.D."/>
            <person name="Brunham R.C."/>
            <person name="Shen C."/>
            <person name="Gill S.R."/>
            <person name="Heidelberg J.F."/>
            <person name="White O."/>
            <person name="Hickey E.K."/>
            <person name="Peterson J.D."/>
            <person name="Utterback T.R."/>
            <person name="Berry K.J."/>
            <person name="Bass S."/>
            <person name="Linher K.D."/>
            <person name="Weidman J.F."/>
            <person name="Khouri H.M."/>
            <person name="Craven B."/>
            <person name="Bowman C."/>
            <person name="Dodson R.J."/>
            <person name="Gwinn M.L."/>
            <person name="Nelson W.C."/>
            <person name="DeBoy R.T."/>
            <person name="Kolonay J.F."/>
            <person name="McClarty G."/>
            <person name="Salzberg S.L."/>
            <person name="Eisen J.A."/>
            <person name="Fraser C.M."/>
        </authorList>
    </citation>
    <scope>NUCLEOTIDE SEQUENCE [LARGE SCALE GENOMIC DNA]</scope>
    <source>
        <strain>MoPn / Nigg</strain>
    </source>
</reference>
<proteinExistence type="inferred from homology"/>
<sequence>MVATSKQTTQGYVVEAYGNLLRVHFDGHVRQGEVAYVSVDDTWLKAEIIEVVGDEVKVQVFEETQGISRGALVTFSGHLLEAELGPGLLQGIFDGLQNRLEVLADTSLFLKRGEYVNAICRETVWAYTQKASVGDVLSRGDVLGTVKEGRFDHKIMVPFSCFEEVTITWVISSGDYTVDTVIAKGRTASGAELEFTMVQKWPIKQAFLEGEKVPSHEIMDVGLRVLDTQIPVLKGGTFCTPGPFGAGKTVLQHHLSKYAAVDIVVLCACGERAGEVVEILQEFPHLTDPHTGQSLMHRTCIICNTSSMPVAARESSIYLGITIAEYYRQMGLHVLLLADSTSRWAQALREISGRLEEIPGEEAFPAYLASRIAAFYERGGAVKMKDGSEGSLTICGAVSPAGGNFEEPVTQATLSVVGAFCGLSKARADARRYPSIDPMISWSKYLDSVAEILEKKVPGWGDSVKKASRFLEEGAEIGKRIEVVGEEGISMEDIEIFLKSELYDFCYLQQNAFDAEDCYCPFDRQIELFSLMSHIFSSRFCFDCPDNARSFFLELQSKIKTLNGQKFLSEDYQKGLEVIYKLLESKMVQTA</sequence>
<dbReference type="EC" id="7.1.2.2"/>
<dbReference type="EMBL" id="AE002160">
    <property type="protein sequence ID" value="AAF39416.1"/>
    <property type="molecule type" value="Genomic_DNA"/>
</dbReference>
<dbReference type="PIR" id="E81687">
    <property type="entry name" value="E81687"/>
</dbReference>
<dbReference type="RefSeq" id="WP_010230899.1">
    <property type="nucleotide sequence ID" value="NZ_CP063055.1"/>
</dbReference>
<dbReference type="SMR" id="Q9PK85"/>
<dbReference type="GeneID" id="1245941"/>
<dbReference type="KEGG" id="cmu:TC_0582"/>
<dbReference type="eggNOG" id="COG1155">
    <property type="taxonomic scope" value="Bacteria"/>
</dbReference>
<dbReference type="HOGENOM" id="CLU_008162_1_1_0"/>
<dbReference type="OrthoDB" id="9803053at2"/>
<dbReference type="Proteomes" id="UP000000800">
    <property type="component" value="Chromosome"/>
</dbReference>
<dbReference type="GO" id="GO:0005524">
    <property type="term" value="F:ATP binding"/>
    <property type="evidence" value="ECO:0007669"/>
    <property type="project" value="UniProtKB-UniRule"/>
</dbReference>
<dbReference type="GO" id="GO:0046933">
    <property type="term" value="F:proton-transporting ATP synthase activity, rotational mechanism"/>
    <property type="evidence" value="ECO:0007669"/>
    <property type="project" value="UniProtKB-UniRule"/>
</dbReference>
<dbReference type="GO" id="GO:0046961">
    <property type="term" value="F:proton-transporting ATPase activity, rotational mechanism"/>
    <property type="evidence" value="ECO:0007669"/>
    <property type="project" value="InterPro"/>
</dbReference>
<dbReference type="GO" id="GO:0042777">
    <property type="term" value="P:proton motive force-driven plasma membrane ATP synthesis"/>
    <property type="evidence" value="ECO:0007669"/>
    <property type="project" value="UniProtKB-UniRule"/>
</dbReference>
<dbReference type="CDD" id="cd01426">
    <property type="entry name" value="ATP-synt_F1_V1_A1_AB_FliI_N"/>
    <property type="match status" value="1"/>
</dbReference>
<dbReference type="CDD" id="cd18111">
    <property type="entry name" value="ATP-synt_V_A-type_alpha_C"/>
    <property type="match status" value="1"/>
</dbReference>
<dbReference type="CDD" id="cd01134">
    <property type="entry name" value="V_A-ATPase_A"/>
    <property type="match status" value="1"/>
</dbReference>
<dbReference type="FunFam" id="3.40.50.300:FF:000675">
    <property type="entry name" value="V-type ATP synthase alpha chain"/>
    <property type="match status" value="1"/>
</dbReference>
<dbReference type="Gene3D" id="2.30.30.650">
    <property type="match status" value="1"/>
</dbReference>
<dbReference type="Gene3D" id="2.40.50.100">
    <property type="match status" value="1"/>
</dbReference>
<dbReference type="Gene3D" id="1.10.1140.10">
    <property type="entry name" value="Bovine Mitochondrial F1-atpase, Atp Synthase Beta Chain, Chain D, domain 3"/>
    <property type="match status" value="1"/>
</dbReference>
<dbReference type="Gene3D" id="3.40.50.300">
    <property type="entry name" value="P-loop containing nucleotide triphosphate hydrolases"/>
    <property type="match status" value="1"/>
</dbReference>
<dbReference type="HAMAP" id="MF_00309">
    <property type="entry name" value="ATP_synth_A_arch"/>
    <property type="match status" value="1"/>
</dbReference>
<dbReference type="InterPro" id="IPR055190">
    <property type="entry name" value="ATP-synt_VA_C"/>
</dbReference>
<dbReference type="InterPro" id="IPR031686">
    <property type="entry name" value="ATP-synth_a_Xtn"/>
</dbReference>
<dbReference type="InterPro" id="IPR020003">
    <property type="entry name" value="ATPase_a/bsu_AS"/>
</dbReference>
<dbReference type="InterPro" id="IPR004100">
    <property type="entry name" value="ATPase_F1/V1/A1_a/bsu_N"/>
</dbReference>
<dbReference type="InterPro" id="IPR000194">
    <property type="entry name" value="ATPase_F1/V1/A1_a/bsu_nucl-bd"/>
</dbReference>
<dbReference type="InterPro" id="IPR024034">
    <property type="entry name" value="ATPase_F1/V1_b/a_C"/>
</dbReference>
<dbReference type="InterPro" id="IPR027417">
    <property type="entry name" value="P-loop_NTPase"/>
</dbReference>
<dbReference type="InterPro" id="IPR022878">
    <property type="entry name" value="V-ATPase_asu"/>
</dbReference>
<dbReference type="NCBIfam" id="NF003220">
    <property type="entry name" value="PRK04192.1"/>
    <property type="match status" value="1"/>
</dbReference>
<dbReference type="PANTHER" id="PTHR43607:SF1">
    <property type="entry name" value="H(+)-TRANSPORTING TWO-SECTOR ATPASE"/>
    <property type="match status" value="1"/>
</dbReference>
<dbReference type="PANTHER" id="PTHR43607">
    <property type="entry name" value="V-TYPE PROTON ATPASE CATALYTIC SUBUNIT A"/>
    <property type="match status" value="1"/>
</dbReference>
<dbReference type="Pfam" id="PF00006">
    <property type="entry name" value="ATP-synt_ab"/>
    <property type="match status" value="1"/>
</dbReference>
<dbReference type="Pfam" id="PF02874">
    <property type="entry name" value="ATP-synt_ab_N"/>
    <property type="match status" value="1"/>
</dbReference>
<dbReference type="Pfam" id="PF16886">
    <property type="entry name" value="ATP-synt_ab_Xtn"/>
    <property type="match status" value="1"/>
</dbReference>
<dbReference type="Pfam" id="PF22919">
    <property type="entry name" value="ATP-synt_VA_C"/>
    <property type="match status" value="1"/>
</dbReference>
<dbReference type="SUPFAM" id="SSF52540">
    <property type="entry name" value="P-loop containing nucleoside triphosphate hydrolases"/>
    <property type="match status" value="1"/>
</dbReference>
<dbReference type="PROSITE" id="PS00152">
    <property type="entry name" value="ATPASE_ALPHA_BETA"/>
    <property type="match status" value="1"/>
</dbReference>